<name>MNME_VESOH</name>
<feature type="chain" id="PRO_1000048902" description="tRNA modification GTPase MnmE">
    <location>
        <begin position="1"/>
        <end position="447"/>
    </location>
</feature>
<feature type="domain" description="TrmE-type G">
    <location>
        <begin position="216"/>
        <end position="371"/>
    </location>
</feature>
<feature type="binding site" evidence="1">
    <location>
        <position position="24"/>
    </location>
    <ligand>
        <name>(6S)-5-formyl-5,6,7,8-tetrahydrofolate</name>
        <dbReference type="ChEBI" id="CHEBI:57457"/>
    </ligand>
</feature>
<feature type="binding site" evidence="1">
    <location>
        <position position="81"/>
    </location>
    <ligand>
        <name>(6S)-5-formyl-5,6,7,8-tetrahydrofolate</name>
        <dbReference type="ChEBI" id="CHEBI:57457"/>
    </ligand>
</feature>
<feature type="binding site" evidence="1">
    <location>
        <position position="120"/>
    </location>
    <ligand>
        <name>(6S)-5-formyl-5,6,7,8-tetrahydrofolate</name>
        <dbReference type="ChEBI" id="CHEBI:57457"/>
    </ligand>
</feature>
<feature type="binding site" evidence="1">
    <location>
        <begin position="226"/>
        <end position="231"/>
    </location>
    <ligand>
        <name>GTP</name>
        <dbReference type="ChEBI" id="CHEBI:37565"/>
    </ligand>
</feature>
<feature type="binding site" evidence="1">
    <location>
        <position position="226"/>
    </location>
    <ligand>
        <name>K(+)</name>
        <dbReference type="ChEBI" id="CHEBI:29103"/>
    </ligand>
</feature>
<feature type="binding site" evidence="1">
    <location>
        <position position="230"/>
    </location>
    <ligand>
        <name>Mg(2+)</name>
        <dbReference type="ChEBI" id="CHEBI:18420"/>
    </ligand>
</feature>
<feature type="binding site" evidence="1">
    <location>
        <begin position="245"/>
        <end position="251"/>
    </location>
    <ligand>
        <name>GTP</name>
        <dbReference type="ChEBI" id="CHEBI:37565"/>
    </ligand>
</feature>
<feature type="binding site" evidence="1">
    <location>
        <position position="245"/>
    </location>
    <ligand>
        <name>K(+)</name>
        <dbReference type="ChEBI" id="CHEBI:29103"/>
    </ligand>
</feature>
<feature type="binding site" evidence="1">
    <location>
        <position position="247"/>
    </location>
    <ligand>
        <name>K(+)</name>
        <dbReference type="ChEBI" id="CHEBI:29103"/>
    </ligand>
</feature>
<feature type="binding site" evidence="1">
    <location>
        <position position="250"/>
    </location>
    <ligand>
        <name>K(+)</name>
        <dbReference type="ChEBI" id="CHEBI:29103"/>
    </ligand>
</feature>
<feature type="binding site" evidence="1">
    <location>
        <position position="251"/>
    </location>
    <ligand>
        <name>Mg(2+)</name>
        <dbReference type="ChEBI" id="CHEBI:18420"/>
    </ligand>
</feature>
<feature type="binding site" evidence="1">
    <location>
        <begin position="270"/>
        <end position="273"/>
    </location>
    <ligand>
        <name>GTP</name>
        <dbReference type="ChEBI" id="CHEBI:37565"/>
    </ligand>
</feature>
<feature type="binding site" evidence="1">
    <location>
        <position position="447"/>
    </location>
    <ligand>
        <name>(6S)-5-formyl-5,6,7,8-tetrahydrofolate</name>
        <dbReference type="ChEBI" id="CHEBI:57457"/>
    </ligand>
</feature>
<sequence length="447" mass="48610">MNSSKTTICALASSVGKGGIGIVRVSGPLCKVIAKKMLGFIPKPRYAYYGLFFDQESTEIDKGIALFFPKPYSFTGEDVLEFQGHGGMIGMRLLLESAISMGAKLAESGEFSKRSFLNGKMDLVQAEAISDMINANSKRASKSAFRSLSGDFSNQINGLTKSIIELRVFVEATIDFSDEEIDFLQFDQVKCKIKDIKQTIETILKSATQGIILREGLNVAIAGKPNAGKSSLLNALTQESSAIVTDIAGTTRDVLKETIHVNGVPLSIIDTAGLRNSHDKIEKEGIKRANFEIEHADVVLMVFDAQDDKPDLSILPKNINDQSLLLIKNKVDLTSGAIKREVINDIVQLSVSAKYSEGIKLLRKELSNISGLEDLSEGVVLARRRHIIALEASLVSIGNAIMQLEIGAIELMAEDLRFAGQFMGSITGEFSSDDLLDEIFSSFCIGK</sequence>
<accession>A5CVJ3</accession>
<gene>
    <name evidence="1" type="primary">mnmE</name>
    <name evidence="1" type="synonym">trmE</name>
    <name type="ordered locus">COSY_0916</name>
</gene>
<reference key="1">
    <citation type="journal article" date="2007" name="Curr. Biol.">
        <title>Reduced genome of the thioautotrophic intracellular symbiont in a deep-sea clam, Calyptogena okutanii.</title>
        <authorList>
            <person name="Kuwahara H."/>
            <person name="Yoshida T."/>
            <person name="Takaki Y."/>
            <person name="Shimamura S."/>
            <person name="Nishi S."/>
            <person name="Harada M."/>
            <person name="Matsuyama K."/>
            <person name="Takishita K."/>
            <person name="Kawato M."/>
            <person name="Uematsu K."/>
            <person name="Fujiwara Y."/>
            <person name="Sato T."/>
            <person name="Kato C."/>
            <person name="Kitagawa M."/>
            <person name="Kato I."/>
            <person name="Maruyama T."/>
        </authorList>
    </citation>
    <scope>NUCLEOTIDE SEQUENCE [LARGE SCALE GENOMIC DNA]</scope>
    <source>
        <strain>HA</strain>
    </source>
</reference>
<organism>
    <name type="scientific">Vesicomyosocius okutanii subsp. Calyptogena okutanii (strain HA)</name>
    <dbReference type="NCBI Taxonomy" id="412965"/>
    <lineage>
        <taxon>Bacteria</taxon>
        <taxon>Pseudomonadati</taxon>
        <taxon>Pseudomonadota</taxon>
        <taxon>Gammaproteobacteria</taxon>
        <taxon>Candidatus Pseudothioglobaceae</taxon>
        <taxon>Candidatus Vesicomyosocius</taxon>
    </lineage>
</organism>
<proteinExistence type="inferred from homology"/>
<comment type="function">
    <text evidence="1">Exhibits a very high intrinsic GTPase hydrolysis rate. Involved in the addition of a carboxymethylaminomethyl (cmnm) group at the wobble position (U34) of certain tRNAs, forming tRNA-cmnm(5)s(2)U34.</text>
</comment>
<comment type="cofactor">
    <cofactor evidence="1">
        <name>K(+)</name>
        <dbReference type="ChEBI" id="CHEBI:29103"/>
    </cofactor>
    <text evidence="1">Binds 1 potassium ion per subunit.</text>
</comment>
<comment type="subunit">
    <text evidence="1">Homodimer. Heterotetramer of two MnmE and two MnmG subunits.</text>
</comment>
<comment type="subcellular location">
    <subcellularLocation>
        <location evidence="1">Cytoplasm</location>
    </subcellularLocation>
</comment>
<comment type="similarity">
    <text evidence="1">Belongs to the TRAFAC class TrmE-Era-EngA-EngB-Septin-like GTPase superfamily. TrmE GTPase family.</text>
</comment>
<protein>
    <recommendedName>
        <fullName evidence="1">tRNA modification GTPase MnmE</fullName>
        <ecNumber evidence="1">3.6.-.-</ecNumber>
    </recommendedName>
</protein>
<dbReference type="EC" id="3.6.-.-" evidence="1"/>
<dbReference type="EMBL" id="AP009247">
    <property type="protein sequence ID" value="BAF62015.1"/>
    <property type="molecule type" value="Genomic_DNA"/>
</dbReference>
<dbReference type="RefSeq" id="WP_011930284.1">
    <property type="nucleotide sequence ID" value="NC_009465.1"/>
</dbReference>
<dbReference type="SMR" id="A5CVJ3"/>
<dbReference type="STRING" id="412965.COSY_0916"/>
<dbReference type="KEGG" id="vok:COSY_0916"/>
<dbReference type="eggNOG" id="COG0486">
    <property type="taxonomic scope" value="Bacteria"/>
</dbReference>
<dbReference type="HOGENOM" id="CLU_019624_4_1_6"/>
<dbReference type="OrthoDB" id="9805918at2"/>
<dbReference type="Proteomes" id="UP000000247">
    <property type="component" value="Chromosome"/>
</dbReference>
<dbReference type="GO" id="GO:0005829">
    <property type="term" value="C:cytosol"/>
    <property type="evidence" value="ECO:0007669"/>
    <property type="project" value="TreeGrafter"/>
</dbReference>
<dbReference type="GO" id="GO:0005525">
    <property type="term" value="F:GTP binding"/>
    <property type="evidence" value="ECO:0007669"/>
    <property type="project" value="UniProtKB-UniRule"/>
</dbReference>
<dbReference type="GO" id="GO:0003924">
    <property type="term" value="F:GTPase activity"/>
    <property type="evidence" value="ECO:0007669"/>
    <property type="project" value="UniProtKB-UniRule"/>
</dbReference>
<dbReference type="GO" id="GO:0046872">
    <property type="term" value="F:metal ion binding"/>
    <property type="evidence" value="ECO:0007669"/>
    <property type="project" value="UniProtKB-KW"/>
</dbReference>
<dbReference type="GO" id="GO:0030488">
    <property type="term" value="P:tRNA methylation"/>
    <property type="evidence" value="ECO:0007669"/>
    <property type="project" value="TreeGrafter"/>
</dbReference>
<dbReference type="GO" id="GO:0002098">
    <property type="term" value="P:tRNA wobble uridine modification"/>
    <property type="evidence" value="ECO:0007669"/>
    <property type="project" value="TreeGrafter"/>
</dbReference>
<dbReference type="CDD" id="cd04164">
    <property type="entry name" value="trmE"/>
    <property type="match status" value="1"/>
</dbReference>
<dbReference type="CDD" id="cd14858">
    <property type="entry name" value="TrmE_N"/>
    <property type="match status" value="1"/>
</dbReference>
<dbReference type="FunFam" id="3.40.50.300:FF:001376">
    <property type="entry name" value="tRNA modification GTPase MnmE"/>
    <property type="match status" value="1"/>
</dbReference>
<dbReference type="Gene3D" id="3.40.50.300">
    <property type="entry name" value="P-loop containing nucleotide triphosphate hydrolases"/>
    <property type="match status" value="1"/>
</dbReference>
<dbReference type="Gene3D" id="3.30.1360.120">
    <property type="entry name" value="Probable tRNA modification gtpase trme, domain 1"/>
    <property type="match status" value="1"/>
</dbReference>
<dbReference type="Gene3D" id="1.20.120.430">
    <property type="entry name" value="tRNA modification GTPase MnmE domain 2"/>
    <property type="match status" value="1"/>
</dbReference>
<dbReference type="HAMAP" id="MF_00379">
    <property type="entry name" value="GTPase_MnmE"/>
    <property type="match status" value="1"/>
</dbReference>
<dbReference type="InterPro" id="IPR031168">
    <property type="entry name" value="G_TrmE"/>
</dbReference>
<dbReference type="InterPro" id="IPR006073">
    <property type="entry name" value="GTP-bd"/>
</dbReference>
<dbReference type="InterPro" id="IPR018948">
    <property type="entry name" value="GTP-bd_TrmE_N"/>
</dbReference>
<dbReference type="InterPro" id="IPR004520">
    <property type="entry name" value="GTPase_MnmE"/>
</dbReference>
<dbReference type="InterPro" id="IPR027368">
    <property type="entry name" value="MnmE_dom2"/>
</dbReference>
<dbReference type="InterPro" id="IPR025867">
    <property type="entry name" value="MnmE_helical"/>
</dbReference>
<dbReference type="InterPro" id="IPR027417">
    <property type="entry name" value="P-loop_NTPase"/>
</dbReference>
<dbReference type="InterPro" id="IPR005225">
    <property type="entry name" value="Small_GTP-bd"/>
</dbReference>
<dbReference type="InterPro" id="IPR027266">
    <property type="entry name" value="TrmE/GcvT_dom1"/>
</dbReference>
<dbReference type="NCBIfam" id="TIGR00450">
    <property type="entry name" value="mnmE_trmE_thdF"/>
    <property type="match status" value="1"/>
</dbReference>
<dbReference type="NCBIfam" id="NF003661">
    <property type="entry name" value="PRK05291.1-3"/>
    <property type="match status" value="1"/>
</dbReference>
<dbReference type="NCBIfam" id="TIGR00231">
    <property type="entry name" value="small_GTP"/>
    <property type="match status" value="1"/>
</dbReference>
<dbReference type="PANTHER" id="PTHR42714">
    <property type="entry name" value="TRNA MODIFICATION GTPASE GTPBP3"/>
    <property type="match status" value="1"/>
</dbReference>
<dbReference type="PANTHER" id="PTHR42714:SF2">
    <property type="entry name" value="TRNA MODIFICATION GTPASE GTPBP3, MITOCHONDRIAL"/>
    <property type="match status" value="1"/>
</dbReference>
<dbReference type="Pfam" id="PF01926">
    <property type="entry name" value="MMR_HSR1"/>
    <property type="match status" value="1"/>
</dbReference>
<dbReference type="Pfam" id="PF12631">
    <property type="entry name" value="MnmE_helical"/>
    <property type="match status" value="1"/>
</dbReference>
<dbReference type="Pfam" id="PF10396">
    <property type="entry name" value="TrmE_N"/>
    <property type="match status" value="1"/>
</dbReference>
<dbReference type="SUPFAM" id="SSF52540">
    <property type="entry name" value="P-loop containing nucleoside triphosphate hydrolases"/>
    <property type="match status" value="1"/>
</dbReference>
<dbReference type="SUPFAM" id="SSF116878">
    <property type="entry name" value="TrmE connector domain"/>
    <property type="match status" value="1"/>
</dbReference>
<dbReference type="PROSITE" id="PS51709">
    <property type="entry name" value="G_TRME"/>
    <property type="match status" value="1"/>
</dbReference>
<keyword id="KW-0963">Cytoplasm</keyword>
<keyword id="KW-0342">GTP-binding</keyword>
<keyword id="KW-0378">Hydrolase</keyword>
<keyword id="KW-0460">Magnesium</keyword>
<keyword id="KW-0479">Metal-binding</keyword>
<keyword id="KW-0547">Nucleotide-binding</keyword>
<keyword id="KW-0630">Potassium</keyword>
<keyword id="KW-1185">Reference proteome</keyword>
<keyword id="KW-0819">tRNA processing</keyword>
<evidence type="ECO:0000255" key="1">
    <source>
        <dbReference type="HAMAP-Rule" id="MF_00379"/>
    </source>
</evidence>